<dbReference type="EC" id="3.6.5.-" evidence="1"/>
<dbReference type="EMBL" id="CP000813">
    <property type="protein sequence ID" value="ABV63095.1"/>
    <property type="molecule type" value="Genomic_DNA"/>
</dbReference>
<dbReference type="SMR" id="A8FFS8"/>
<dbReference type="STRING" id="315750.BPUM_2432"/>
<dbReference type="GeneID" id="5621696"/>
<dbReference type="KEGG" id="bpu:BPUM_2432"/>
<dbReference type="eggNOG" id="COG0536">
    <property type="taxonomic scope" value="Bacteria"/>
</dbReference>
<dbReference type="HOGENOM" id="CLU_011747_2_1_9"/>
<dbReference type="OrthoDB" id="9807318at2"/>
<dbReference type="Proteomes" id="UP000001355">
    <property type="component" value="Chromosome"/>
</dbReference>
<dbReference type="GO" id="GO:0005737">
    <property type="term" value="C:cytoplasm"/>
    <property type="evidence" value="ECO:0007669"/>
    <property type="project" value="UniProtKB-SubCell"/>
</dbReference>
<dbReference type="GO" id="GO:0005525">
    <property type="term" value="F:GTP binding"/>
    <property type="evidence" value="ECO:0007669"/>
    <property type="project" value="UniProtKB-UniRule"/>
</dbReference>
<dbReference type="GO" id="GO:0003924">
    <property type="term" value="F:GTPase activity"/>
    <property type="evidence" value="ECO:0007669"/>
    <property type="project" value="UniProtKB-UniRule"/>
</dbReference>
<dbReference type="GO" id="GO:0000287">
    <property type="term" value="F:magnesium ion binding"/>
    <property type="evidence" value="ECO:0007669"/>
    <property type="project" value="InterPro"/>
</dbReference>
<dbReference type="GO" id="GO:0042254">
    <property type="term" value="P:ribosome biogenesis"/>
    <property type="evidence" value="ECO:0007669"/>
    <property type="project" value="UniProtKB-UniRule"/>
</dbReference>
<dbReference type="CDD" id="cd01898">
    <property type="entry name" value="Obg"/>
    <property type="match status" value="1"/>
</dbReference>
<dbReference type="FunFam" id="2.70.210.12:FF:000001">
    <property type="entry name" value="GTPase Obg"/>
    <property type="match status" value="1"/>
</dbReference>
<dbReference type="FunFam" id="3.40.50.300:FF:000515">
    <property type="entry name" value="GTPase Obg"/>
    <property type="match status" value="1"/>
</dbReference>
<dbReference type="Gene3D" id="3.30.300.350">
    <property type="entry name" value="GTP-binding protein OBG, C-terminal domain"/>
    <property type="match status" value="1"/>
</dbReference>
<dbReference type="Gene3D" id="2.70.210.12">
    <property type="entry name" value="GTP1/OBG domain"/>
    <property type="match status" value="1"/>
</dbReference>
<dbReference type="Gene3D" id="3.40.50.300">
    <property type="entry name" value="P-loop containing nucleotide triphosphate hydrolases"/>
    <property type="match status" value="1"/>
</dbReference>
<dbReference type="HAMAP" id="MF_01454">
    <property type="entry name" value="GTPase_Obg"/>
    <property type="match status" value="1"/>
</dbReference>
<dbReference type="InterPro" id="IPR031167">
    <property type="entry name" value="G_OBG"/>
</dbReference>
<dbReference type="InterPro" id="IPR006073">
    <property type="entry name" value="GTP-bd"/>
</dbReference>
<dbReference type="InterPro" id="IPR014100">
    <property type="entry name" value="GTP-bd_Obg/CgtA"/>
</dbReference>
<dbReference type="InterPro" id="IPR036346">
    <property type="entry name" value="GTP-bd_prot_GTP1/OBG_C_sf"/>
</dbReference>
<dbReference type="InterPro" id="IPR006074">
    <property type="entry name" value="GTP1-OBG_CS"/>
</dbReference>
<dbReference type="InterPro" id="IPR006169">
    <property type="entry name" value="GTP1_OBG_dom"/>
</dbReference>
<dbReference type="InterPro" id="IPR036726">
    <property type="entry name" value="GTP1_OBG_dom_sf"/>
</dbReference>
<dbReference type="InterPro" id="IPR045086">
    <property type="entry name" value="OBG_GTPase"/>
</dbReference>
<dbReference type="InterPro" id="IPR015349">
    <property type="entry name" value="OCT_dom"/>
</dbReference>
<dbReference type="InterPro" id="IPR027417">
    <property type="entry name" value="P-loop_NTPase"/>
</dbReference>
<dbReference type="InterPro" id="IPR005225">
    <property type="entry name" value="Small_GTP-bd"/>
</dbReference>
<dbReference type="NCBIfam" id="TIGR02729">
    <property type="entry name" value="Obg_CgtA"/>
    <property type="match status" value="1"/>
</dbReference>
<dbReference type="NCBIfam" id="TIGR03595">
    <property type="entry name" value="Obg_CgtA_exten"/>
    <property type="match status" value="1"/>
</dbReference>
<dbReference type="NCBIfam" id="NF008954">
    <property type="entry name" value="PRK12296.1"/>
    <property type="match status" value="1"/>
</dbReference>
<dbReference type="NCBIfam" id="NF008955">
    <property type="entry name" value="PRK12297.1"/>
    <property type="match status" value="1"/>
</dbReference>
<dbReference type="NCBIfam" id="NF008956">
    <property type="entry name" value="PRK12299.1"/>
    <property type="match status" value="1"/>
</dbReference>
<dbReference type="NCBIfam" id="TIGR00231">
    <property type="entry name" value="small_GTP"/>
    <property type="match status" value="1"/>
</dbReference>
<dbReference type="PANTHER" id="PTHR11702">
    <property type="entry name" value="DEVELOPMENTALLY REGULATED GTP-BINDING PROTEIN-RELATED"/>
    <property type="match status" value="1"/>
</dbReference>
<dbReference type="PANTHER" id="PTHR11702:SF31">
    <property type="entry name" value="MITOCHONDRIAL RIBOSOME-ASSOCIATED GTPASE 2"/>
    <property type="match status" value="1"/>
</dbReference>
<dbReference type="Pfam" id="PF09269">
    <property type="entry name" value="DUF1967"/>
    <property type="match status" value="1"/>
</dbReference>
<dbReference type="Pfam" id="PF01018">
    <property type="entry name" value="GTP1_OBG"/>
    <property type="match status" value="1"/>
</dbReference>
<dbReference type="Pfam" id="PF01926">
    <property type="entry name" value="MMR_HSR1"/>
    <property type="match status" value="1"/>
</dbReference>
<dbReference type="PIRSF" id="PIRSF002401">
    <property type="entry name" value="GTP_bd_Obg/CgtA"/>
    <property type="match status" value="1"/>
</dbReference>
<dbReference type="PRINTS" id="PR00326">
    <property type="entry name" value="GTP1OBG"/>
</dbReference>
<dbReference type="SUPFAM" id="SSF102741">
    <property type="entry name" value="Obg GTP-binding protein C-terminal domain"/>
    <property type="match status" value="1"/>
</dbReference>
<dbReference type="SUPFAM" id="SSF82051">
    <property type="entry name" value="Obg GTP-binding protein N-terminal domain"/>
    <property type="match status" value="1"/>
</dbReference>
<dbReference type="SUPFAM" id="SSF52540">
    <property type="entry name" value="P-loop containing nucleoside triphosphate hydrolases"/>
    <property type="match status" value="1"/>
</dbReference>
<dbReference type="PROSITE" id="PS51710">
    <property type="entry name" value="G_OBG"/>
    <property type="match status" value="1"/>
</dbReference>
<dbReference type="PROSITE" id="PS00905">
    <property type="entry name" value="GTP1_OBG"/>
    <property type="match status" value="1"/>
</dbReference>
<dbReference type="PROSITE" id="PS51883">
    <property type="entry name" value="OBG"/>
    <property type="match status" value="1"/>
</dbReference>
<dbReference type="PROSITE" id="PS51881">
    <property type="entry name" value="OCT"/>
    <property type="match status" value="1"/>
</dbReference>
<comment type="function">
    <text evidence="1">An essential GTPase which binds GTP, GDP and possibly (p)ppGpp with moderate affinity, with high nucleotide exchange rates and a fairly low GTP hydrolysis rate. Plays a role in control of the cell cycle, stress response, ribosome biogenesis and in those bacteria that undergo differentiation, in morphogenesis control.</text>
</comment>
<comment type="cofactor">
    <cofactor evidence="1">
        <name>Mg(2+)</name>
        <dbReference type="ChEBI" id="CHEBI:18420"/>
    </cofactor>
</comment>
<comment type="subunit">
    <text evidence="1">Monomer.</text>
</comment>
<comment type="subcellular location">
    <subcellularLocation>
        <location evidence="1">Cytoplasm</location>
    </subcellularLocation>
</comment>
<comment type="similarity">
    <text evidence="1">Belongs to the TRAFAC class OBG-HflX-like GTPase superfamily. OBG GTPase family.</text>
</comment>
<keyword id="KW-0963">Cytoplasm</keyword>
<keyword id="KW-0342">GTP-binding</keyword>
<keyword id="KW-0378">Hydrolase</keyword>
<keyword id="KW-0460">Magnesium</keyword>
<keyword id="KW-0479">Metal-binding</keyword>
<keyword id="KW-0547">Nucleotide-binding</keyword>
<organism>
    <name type="scientific">Bacillus pumilus (strain SAFR-032)</name>
    <dbReference type="NCBI Taxonomy" id="315750"/>
    <lineage>
        <taxon>Bacteria</taxon>
        <taxon>Bacillati</taxon>
        <taxon>Bacillota</taxon>
        <taxon>Bacilli</taxon>
        <taxon>Bacillales</taxon>
        <taxon>Bacillaceae</taxon>
        <taxon>Bacillus</taxon>
    </lineage>
</organism>
<proteinExistence type="inferred from homology"/>
<name>OBG_BACP2</name>
<sequence length="428" mass="47658">MFVDQVKVYVKGGDGGNGMVAFRREKYVPKGGPAGGDGGNGADVVFEVDEGLRTLMDFRYKRHFKADRGEHGMSKNQHGRNAEEMIVKVPPGTVVTDAETEQVLADLTEHGQRAVIAKGGRGGRGNSRFATPANPAPQLSENGEPGKERDVILELKVLADVGLVGFPSVGKSTLLSIVSSAKPKIADYHFTTLVPNLGVVETDDNRSFVMADLPGLIEGAHEGVGLGHQFLRHIERTRVIVHVIDMSALEGRDPYEDYVTINEELEQYNMRLTERPQIIVANKMDMPDAADNLAAFKEKLTDDYKVFPISAITREGLRELLFEIANQLETTPEFPLYNEEELSDNRVMYRFDEGDAPFEITRDPDGTFVITGKALERLFKMTDFSRDESVKRFSRQLRGMGVDDALRERGAQDGDIIRLLEFEFEFID</sequence>
<gene>
    <name evidence="1" type="primary">obg</name>
    <name type="ordered locus">BPUM_2432</name>
</gene>
<accession>A8FFS8</accession>
<evidence type="ECO:0000255" key="1">
    <source>
        <dbReference type="HAMAP-Rule" id="MF_01454"/>
    </source>
</evidence>
<evidence type="ECO:0000255" key="2">
    <source>
        <dbReference type="PROSITE-ProRule" id="PRU01229"/>
    </source>
</evidence>
<evidence type="ECO:0000255" key="3">
    <source>
        <dbReference type="PROSITE-ProRule" id="PRU01231"/>
    </source>
</evidence>
<evidence type="ECO:0000256" key="4">
    <source>
        <dbReference type="SAM" id="MobiDB-lite"/>
    </source>
</evidence>
<protein>
    <recommendedName>
        <fullName evidence="1">GTPase Obg</fullName>
        <ecNumber evidence="1">3.6.5.-</ecNumber>
    </recommendedName>
    <alternativeName>
        <fullName evidence="1">GTP-binding protein Obg</fullName>
    </alternativeName>
</protein>
<feature type="chain" id="PRO_0000385727" description="GTPase Obg">
    <location>
        <begin position="1"/>
        <end position="428"/>
    </location>
</feature>
<feature type="domain" description="Obg" evidence="3">
    <location>
        <begin position="1"/>
        <end position="158"/>
    </location>
</feature>
<feature type="domain" description="OBG-type G" evidence="1">
    <location>
        <begin position="159"/>
        <end position="329"/>
    </location>
</feature>
<feature type="domain" description="OCT" evidence="2">
    <location>
        <begin position="350"/>
        <end position="428"/>
    </location>
</feature>
<feature type="region of interest" description="Disordered" evidence="4">
    <location>
        <begin position="118"/>
        <end position="145"/>
    </location>
</feature>
<feature type="binding site" evidence="1">
    <location>
        <begin position="165"/>
        <end position="172"/>
    </location>
    <ligand>
        <name>GTP</name>
        <dbReference type="ChEBI" id="CHEBI:37565"/>
    </ligand>
</feature>
<feature type="binding site" evidence="1">
    <location>
        <position position="172"/>
    </location>
    <ligand>
        <name>Mg(2+)</name>
        <dbReference type="ChEBI" id="CHEBI:18420"/>
    </ligand>
</feature>
<feature type="binding site" evidence="1">
    <location>
        <begin position="190"/>
        <end position="194"/>
    </location>
    <ligand>
        <name>GTP</name>
        <dbReference type="ChEBI" id="CHEBI:37565"/>
    </ligand>
</feature>
<feature type="binding site" evidence="1">
    <location>
        <position position="192"/>
    </location>
    <ligand>
        <name>Mg(2+)</name>
        <dbReference type="ChEBI" id="CHEBI:18420"/>
    </ligand>
</feature>
<feature type="binding site" evidence="1">
    <location>
        <begin position="212"/>
        <end position="215"/>
    </location>
    <ligand>
        <name>GTP</name>
        <dbReference type="ChEBI" id="CHEBI:37565"/>
    </ligand>
</feature>
<feature type="binding site" evidence="1">
    <location>
        <begin position="282"/>
        <end position="285"/>
    </location>
    <ligand>
        <name>GTP</name>
        <dbReference type="ChEBI" id="CHEBI:37565"/>
    </ligand>
</feature>
<feature type="binding site" evidence="1">
    <location>
        <begin position="310"/>
        <end position="312"/>
    </location>
    <ligand>
        <name>GTP</name>
        <dbReference type="ChEBI" id="CHEBI:37565"/>
    </ligand>
</feature>
<reference key="1">
    <citation type="journal article" date="2007" name="PLoS ONE">
        <title>Paradoxical DNA repair and peroxide resistance gene conservation in Bacillus pumilus SAFR-032.</title>
        <authorList>
            <person name="Gioia J."/>
            <person name="Yerrapragada S."/>
            <person name="Qin X."/>
            <person name="Jiang H."/>
            <person name="Igboeli O.C."/>
            <person name="Muzny D."/>
            <person name="Dugan-Rocha S."/>
            <person name="Ding Y."/>
            <person name="Hawes A."/>
            <person name="Liu W."/>
            <person name="Perez L."/>
            <person name="Kovar C."/>
            <person name="Dinh H."/>
            <person name="Lee S."/>
            <person name="Nazareth L."/>
            <person name="Blyth P."/>
            <person name="Holder M."/>
            <person name="Buhay C."/>
            <person name="Tirumalai M.R."/>
            <person name="Liu Y."/>
            <person name="Dasgupta I."/>
            <person name="Bokhetache L."/>
            <person name="Fujita M."/>
            <person name="Karouia F."/>
            <person name="Eswara Moorthy P."/>
            <person name="Siefert J."/>
            <person name="Uzman A."/>
            <person name="Buzumbo P."/>
            <person name="Verma A."/>
            <person name="Zwiya H."/>
            <person name="McWilliams B.D."/>
            <person name="Olowu A."/>
            <person name="Clinkenbeard K.D."/>
            <person name="Newcombe D."/>
            <person name="Golebiewski L."/>
            <person name="Petrosino J.F."/>
            <person name="Nicholson W.L."/>
            <person name="Fox G.E."/>
            <person name="Venkateswaran K."/>
            <person name="Highlander S.K."/>
            <person name="Weinstock G.M."/>
        </authorList>
    </citation>
    <scope>NUCLEOTIDE SEQUENCE [LARGE SCALE GENOMIC DNA]</scope>
    <source>
        <strain>SAFR-032</strain>
    </source>
</reference>